<sequence length="232" mass="26533">MPFIFRYSFFNKALIFWYTILMKIYKTINHIAGENTYYLVNDQAVILIDPGSNGQEIISKIKSFEKPLVAILLTHTHYDHIFSLDLVRDAFDHPPVYVSEKEAAWLSSPDDNLSGLGRHDDIINVIARPAENFFKLKQPYQLNGFEFTVLPTPGHSWGGVSFVFHSDELVVTGDALFRETIGRTDLPTSNFEDLITGIRQELFTLPNHYRVYPGHGPSTTICHEKNANPFFH</sequence>
<comment type="cofactor">
    <cofactor evidence="1">
        <name>Zn(2+)</name>
        <dbReference type="ChEBI" id="CHEBI:29105"/>
    </cofactor>
    <text evidence="1">Binds 2 Zn(2+) ions per subunit.</text>
</comment>
<comment type="mass spectrometry" mass="26504.12" method="Electrospray" evidence="2"/>
<comment type="similarity">
    <text evidence="3">Belongs to the metallo-beta-lactamase superfamily.</text>
</comment>
<feature type="chain" id="PRO_0000259670" description="Probable metallo-hydrolase M6_Spy0554">
    <location>
        <begin position="1"/>
        <end position="232"/>
    </location>
</feature>
<feature type="binding site" evidence="1">
    <location>
        <position position="75"/>
    </location>
    <ligand>
        <name>Zn(2+)</name>
        <dbReference type="ChEBI" id="CHEBI:29105"/>
        <label>1</label>
    </ligand>
</feature>
<feature type="binding site" evidence="1">
    <location>
        <position position="77"/>
    </location>
    <ligand>
        <name>Zn(2+)</name>
        <dbReference type="ChEBI" id="CHEBI:29105"/>
        <label>1</label>
    </ligand>
</feature>
<feature type="binding site" evidence="1">
    <location>
        <position position="79"/>
    </location>
    <ligand>
        <name>Zn(2+)</name>
        <dbReference type="ChEBI" id="CHEBI:29105"/>
        <label>2</label>
    </ligand>
</feature>
<feature type="binding site" evidence="1">
    <location>
        <position position="80"/>
    </location>
    <ligand>
        <name>Zn(2+)</name>
        <dbReference type="ChEBI" id="CHEBI:29105"/>
        <label>2</label>
    </ligand>
</feature>
<feature type="binding site" evidence="1">
    <location>
        <position position="155"/>
    </location>
    <ligand>
        <name>Zn(2+)</name>
        <dbReference type="ChEBI" id="CHEBI:29105"/>
        <label>1</label>
    </ligand>
</feature>
<feature type="binding site" evidence="1">
    <location>
        <position position="174"/>
    </location>
    <ligand>
        <name>Zn(2+)</name>
        <dbReference type="ChEBI" id="CHEBI:29105"/>
        <label>1</label>
    </ligand>
</feature>
<feature type="binding site" evidence="1">
    <location>
        <position position="174"/>
    </location>
    <ligand>
        <name>Zn(2+)</name>
        <dbReference type="ChEBI" id="CHEBI:29105"/>
        <label>2</label>
    </ligand>
</feature>
<feature type="binding site" evidence="1">
    <location>
        <position position="215"/>
    </location>
    <ligand>
        <name>Zn(2+)</name>
        <dbReference type="ChEBI" id="CHEBI:29105"/>
        <label>2</label>
    </ligand>
</feature>
<keyword id="KW-0903">Direct protein sequencing</keyword>
<keyword id="KW-0378">Hydrolase</keyword>
<keyword id="KW-0479">Metal-binding</keyword>
<keyword id="KW-0862">Zinc</keyword>
<evidence type="ECO:0000250" key="1"/>
<evidence type="ECO:0000269" key="2">
    <source ref="2"/>
</evidence>
<evidence type="ECO:0000305" key="3"/>
<evidence type="ECO:0000312" key="4">
    <source>
        <dbReference type="EMBL" id="AAT86689.1"/>
    </source>
</evidence>
<gene>
    <name type="ordered locus">M6_Spy0554</name>
</gene>
<proteinExistence type="evidence at protein level"/>
<reference evidence="4" key="1">
    <citation type="journal article" date="2004" name="J. Infect. Dis.">
        <title>Progress toward characterization of the group A Streptococcus metagenome: complete genome sequence of a macrolide-resistant serotype M6 strain.</title>
        <authorList>
            <person name="Banks D.J."/>
            <person name="Porcella S.F."/>
            <person name="Barbian K.D."/>
            <person name="Beres S.B."/>
            <person name="Philips L.E."/>
            <person name="Voyich J.M."/>
            <person name="DeLeo F.R."/>
            <person name="Martin J.M."/>
            <person name="Somerville G.A."/>
            <person name="Musser J.M."/>
        </authorList>
    </citation>
    <scope>NUCLEOTIDE SEQUENCE [LARGE SCALE GENOMIC DNA]</scope>
    <source>
        <strain>ATCC BAA-946 / MGAS10394</strain>
    </source>
</reference>
<reference evidence="3" key="2">
    <citation type="submission" date="2000-05" db="UniProtKB">
        <title>Two-dimensional gel electrophoresis map of Streptococcus pyogenes proteins.</title>
        <authorList>
            <person name="Hogan D.A."/>
            <person name="Du P."/>
            <person name="Stevenson T.I."/>
            <person name="Whitton M."/>
            <person name="Kilby G.W."/>
            <person name="Rogers J."/>
            <person name="VanBogelen R.A."/>
        </authorList>
    </citation>
    <scope>PROTEIN SEQUENCE OF 89-101 AND 184-210</scope>
    <scope>MASS SPECTROMETRY</scope>
    <source>
        <strain evidence="2">JRS4 / Serotype M6</strain>
    </source>
</reference>
<dbReference type="EC" id="3.-.-.-"/>
<dbReference type="EMBL" id="CP000003">
    <property type="protein sequence ID" value="AAT86689.1"/>
    <property type="molecule type" value="Genomic_DNA"/>
</dbReference>
<dbReference type="SMR" id="Q5XD24"/>
<dbReference type="KEGG" id="spa:M6_Spy0554"/>
<dbReference type="HOGENOM" id="CLU_030571_5_2_9"/>
<dbReference type="Proteomes" id="UP000001167">
    <property type="component" value="Chromosome"/>
</dbReference>
<dbReference type="GO" id="GO:0016787">
    <property type="term" value="F:hydrolase activity"/>
    <property type="evidence" value="ECO:0007669"/>
    <property type="project" value="UniProtKB-KW"/>
</dbReference>
<dbReference type="GO" id="GO:0046872">
    <property type="term" value="F:metal ion binding"/>
    <property type="evidence" value="ECO:0007669"/>
    <property type="project" value="UniProtKB-KW"/>
</dbReference>
<dbReference type="CDD" id="cd06262">
    <property type="entry name" value="metallo-hydrolase-like_MBL-fold"/>
    <property type="match status" value="1"/>
</dbReference>
<dbReference type="Gene3D" id="3.60.15.10">
    <property type="entry name" value="Ribonuclease Z/Hydroxyacylglutathione hydrolase-like"/>
    <property type="match status" value="1"/>
</dbReference>
<dbReference type="InterPro" id="IPR051453">
    <property type="entry name" value="MBL_Glyoxalase_II"/>
</dbReference>
<dbReference type="InterPro" id="IPR001279">
    <property type="entry name" value="Metallo-B-lactamas"/>
</dbReference>
<dbReference type="InterPro" id="IPR036866">
    <property type="entry name" value="RibonucZ/Hydroxyglut_hydro"/>
</dbReference>
<dbReference type="PANTHER" id="PTHR46233">
    <property type="entry name" value="HYDROXYACYLGLUTATHIONE HYDROLASE GLOC"/>
    <property type="match status" value="1"/>
</dbReference>
<dbReference type="PANTHER" id="PTHR46233:SF3">
    <property type="entry name" value="HYDROXYACYLGLUTATHIONE HYDROLASE GLOC"/>
    <property type="match status" value="1"/>
</dbReference>
<dbReference type="Pfam" id="PF00753">
    <property type="entry name" value="Lactamase_B"/>
    <property type="match status" value="1"/>
</dbReference>
<dbReference type="SMART" id="SM00849">
    <property type="entry name" value="Lactamase_B"/>
    <property type="match status" value="1"/>
</dbReference>
<dbReference type="SUPFAM" id="SSF56281">
    <property type="entry name" value="Metallo-hydrolase/oxidoreductase"/>
    <property type="match status" value="1"/>
</dbReference>
<accession>Q5XD24</accession>
<accession>P82561</accession>
<protein>
    <recommendedName>
        <fullName>Probable metallo-hydrolase M6_Spy0554</fullName>
        <ecNumber>3.-.-.-</ecNumber>
    </recommendedName>
</protein>
<name>Y554_STRP6</name>
<organism>
    <name type="scientific">Streptococcus pyogenes serotype M6 (strain ATCC BAA-946 / MGAS10394)</name>
    <dbReference type="NCBI Taxonomy" id="286636"/>
    <lineage>
        <taxon>Bacteria</taxon>
        <taxon>Bacillati</taxon>
        <taxon>Bacillota</taxon>
        <taxon>Bacilli</taxon>
        <taxon>Lactobacillales</taxon>
        <taxon>Streptococcaceae</taxon>
        <taxon>Streptococcus</taxon>
    </lineage>
</organism>